<accession>Q63418</accession>
<feature type="signal peptide" evidence="2">
    <location>
        <begin position="1"/>
        <end position="30"/>
    </location>
</feature>
<feature type="chain" id="PRO_0000003947" description="Protocadherin-3">
    <location>
        <begin position="31"/>
        <end position="797"/>
    </location>
</feature>
<feature type="topological domain" description="Extracellular" evidence="2">
    <location>
        <begin position="31"/>
        <end position="691"/>
    </location>
</feature>
<feature type="transmembrane region" description="Helical" evidence="2">
    <location>
        <begin position="692"/>
        <end position="712"/>
    </location>
</feature>
<feature type="topological domain" description="Cytoplasmic" evidence="2">
    <location>
        <begin position="713"/>
        <end position="797"/>
    </location>
</feature>
<feature type="domain" description="Cadherin 1" evidence="3">
    <location>
        <begin position="35"/>
        <end position="133"/>
    </location>
</feature>
<feature type="domain" description="Cadherin 2" evidence="3">
    <location>
        <begin position="138"/>
        <end position="242"/>
    </location>
</feature>
<feature type="domain" description="Cadherin 3" evidence="3">
    <location>
        <begin position="247"/>
        <end position="346"/>
    </location>
</feature>
<feature type="domain" description="Cadherin 4" evidence="3">
    <location>
        <begin position="351"/>
        <end position="450"/>
    </location>
</feature>
<feature type="domain" description="Cadherin 5" evidence="3">
    <location>
        <begin position="455"/>
        <end position="560"/>
    </location>
</feature>
<feature type="domain" description="Cadherin 6" evidence="3">
    <location>
        <begin position="567"/>
        <end position="670"/>
    </location>
</feature>
<feature type="glycosylation site" description="N-linked (GlcNAc...) asparagine" evidence="2">
    <location>
        <position position="169"/>
    </location>
</feature>
<feature type="glycosylation site" description="N-linked (GlcNAc...) asparagine" evidence="2">
    <location>
        <position position="276"/>
    </location>
</feature>
<feature type="glycosylation site" description="N-linked (GlcNAc...) asparagine" evidence="2">
    <location>
        <position position="417"/>
    </location>
</feature>
<feature type="glycosylation site" description="N-linked (GlcNAc...) asparagine" evidence="2">
    <location>
        <position position="566"/>
    </location>
</feature>
<dbReference type="EMBL" id="L43592">
    <property type="protein sequence ID" value="AAC42079.1"/>
    <property type="molecule type" value="mRNA"/>
</dbReference>
<dbReference type="RefSeq" id="NP_775122.1">
    <property type="nucleotide sequence ID" value="NM_173099.1"/>
</dbReference>
<dbReference type="SMR" id="Q63418"/>
<dbReference type="FunCoup" id="Q63418">
    <property type="interactions" value="29"/>
</dbReference>
<dbReference type="STRING" id="10116.ENSRNOP00000045459"/>
<dbReference type="GlyCosmos" id="Q63418">
    <property type="glycosylation" value="4 sites, No reported glycans"/>
</dbReference>
<dbReference type="GlyGen" id="Q63418">
    <property type="glycosylation" value="5 sites"/>
</dbReference>
<dbReference type="iPTMnet" id="Q63418"/>
<dbReference type="PhosphoSitePlus" id="Q63418"/>
<dbReference type="SwissPalm" id="Q63418"/>
<dbReference type="PaxDb" id="10116-ENSRNOP00000045459"/>
<dbReference type="GeneID" id="25133"/>
<dbReference type="KEGG" id="rno:25133"/>
<dbReference type="UCSC" id="RGD:3266">
    <property type="organism name" value="rat"/>
</dbReference>
<dbReference type="AGR" id="RGD:3266"/>
<dbReference type="CTD" id="56124"/>
<dbReference type="RGD" id="3266">
    <property type="gene designation" value="Pcdh3"/>
</dbReference>
<dbReference type="eggNOG" id="KOG3594">
    <property type="taxonomic scope" value="Eukaryota"/>
</dbReference>
<dbReference type="InParanoid" id="Q63418"/>
<dbReference type="OrthoDB" id="6252479at2759"/>
<dbReference type="PhylomeDB" id="Q63418"/>
<dbReference type="PRO" id="PR:Q63418"/>
<dbReference type="Proteomes" id="UP000002494">
    <property type="component" value="Unplaced"/>
</dbReference>
<dbReference type="GO" id="GO:0005911">
    <property type="term" value="C:cell-cell junction"/>
    <property type="evidence" value="ECO:0000266"/>
    <property type="project" value="RGD"/>
</dbReference>
<dbReference type="GO" id="GO:0005886">
    <property type="term" value="C:plasma membrane"/>
    <property type="evidence" value="ECO:0000318"/>
    <property type="project" value="GO_Central"/>
</dbReference>
<dbReference type="GO" id="GO:0005509">
    <property type="term" value="F:calcium ion binding"/>
    <property type="evidence" value="ECO:0007669"/>
    <property type="project" value="InterPro"/>
</dbReference>
<dbReference type="GO" id="GO:0007155">
    <property type="term" value="P:cell adhesion"/>
    <property type="evidence" value="ECO:0000318"/>
    <property type="project" value="GO_Central"/>
</dbReference>
<dbReference type="GO" id="GO:0007156">
    <property type="term" value="P:homophilic cell adhesion via plasma membrane adhesion molecules"/>
    <property type="evidence" value="ECO:0007669"/>
    <property type="project" value="InterPro"/>
</dbReference>
<dbReference type="CDD" id="cd11304">
    <property type="entry name" value="Cadherin_repeat"/>
    <property type="match status" value="5"/>
</dbReference>
<dbReference type="FunFam" id="2.60.40.60:FF:000001">
    <property type="entry name" value="Protocadherin alpha 2"/>
    <property type="match status" value="1"/>
</dbReference>
<dbReference type="FunFam" id="2.60.40.60:FF:000002">
    <property type="entry name" value="Protocadherin alpha 2"/>
    <property type="match status" value="1"/>
</dbReference>
<dbReference type="FunFam" id="2.60.40.60:FF:000006">
    <property type="entry name" value="Protocadherin alpha 2"/>
    <property type="match status" value="1"/>
</dbReference>
<dbReference type="FunFam" id="2.60.40.60:FF:000046">
    <property type="entry name" value="Protocadherin beta 5"/>
    <property type="match status" value="1"/>
</dbReference>
<dbReference type="FunFam" id="2.60.40.60:FF:000309">
    <property type="entry name" value="Protocadherin beta-8"/>
    <property type="match status" value="1"/>
</dbReference>
<dbReference type="FunFam" id="2.60.40.60:FF:000018">
    <property type="entry name" value="Protocadherin gamma c3"/>
    <property type="match status" value="1"/>
</dbReference>
<dbReference type="Gene3D" id="2.60.40.60">
    <property type="entry name" value="Cadherins"/>
    <property type="match status" value="6"/>
</dbReference>
<dbReference type="InterPro" id="IPR002126">
    <property type="entry name" value="Cadherin-like_dom"/>
</dbReference>
<dbReference type="InterPro" id="IPR015919">
    <property type="entry name" value="Cadherin-like_sf"/>
</dbReference>
<dbReference type="InterPro" id="IPR032455">
    <property type="entry name" value="Cadherin_C"/>
</dbReference>
<dbReference type="InterPro" id="IPR020894">
    <property type="entry name" value="Cadherin_CS"/>
</dbReference>
<dbReference type="InterPro" id="IPR013164">
    <property type="entry name" value="Cadherin_N"/>
</dbReference>
<dbReference type="InterPro" id="IPR050174">
    <property type="entry name" value="Protocadherin/Cadherin-CA"/>
</dbReference>
<dbReference type="PANTHER" id="PTHR24028">
    <property type="entry name" value="CADHERIN-87A"/>
    <property type="match status" value="1"/>
</dbReference>
<dbReference type="PANTHER" id="PTHR24028:SF95">
    <property type="entry name" value="PROTOCADHERIN BETA 12"/>
    <property type="match status" value="1"/>
</dbReference>
<dbReference type="Pfam" id="PF00028">
    <property type="entry name" value="Cadherin"/>
    <property type="match status" value="5"/>
</dbReference>
<dbReference type="Pfam" id="PF08266">
    <property type="entry name" value="Cadherin_2"/>
    <property type="match status" value="1"/>
</dbReference>
<dbReference type="Pfam" id="PF16492">
    <property type="entry name" value="Cadherin_C_2"/>
    <property type="match status" value="1"/>
</dbReference>
<dbReference type="PRINTS" id="PR00205">
    <property type="entry name" value="CADHERIN"/>
</dbReference>
<dbReference type="SMART" id="SM00112">
    <property type="entry name" value="CA"/>
    <property type="match status" value="6"/>
</dbReference>
<dbReference type="SUPFAM" id="SSF49313">
    <property type="entry name" value="Cadherin-like"/>
    <property type="match status" value="6"/>
</dbReference>
<dbReference type="PROSITE" id="PS00232">
    <property type="entry name" value="CADHERIN_1"/>
    <property type="match status" value="4"/>
</dbReference>
<dbReference type="PROSITE" id="PS50268">
    <property type="entry name" value="CADHERIN_2"/>
    <property type="match status" value="6"/>
</dbReference>
<comment type="function">
    <text>Potential calcium-dependent cell-adhesion protein. May be involved in the establishment and maintenance of specific neuronal connections in the brain.</text>
</comment>
<comment type="subcellular location">
    <subcellularLocation>
        <location evidence="1">Cell membrane</location>
        <topology evidence="1">Single-pass type I membrane protein</topology>
    </subcellularLocation>
</comment>
<comment type="tissue specificity">
    <text>Expressed in brain.</text>
</comment>
<keyword id="KW-0106">Calcium</keyword>
<keyword id="KW-0130">Cell adhesion</keyword>
<keyword id="KW-1003">Cell membrane</keyword>
<keyword id="KW-0325">Glycoprotein</keyword>
<keyword id="KW-0472">Membrane</keyword>
<keyword id="KW-1185">Reference proteome</keyword>
<keyword id="KW-0677">Repeat</keyword>
<keyword id="KW-0732">Signal</keyword>
<keyword id="KW-0812">Transmembrane</keyword>
<keyword id="KW-1133">Transmembrane helix</keyword>
<evidence type="ECO:0000250" key="1"/>
<evidence type="ECO:0000255" key="2"/>
<evidence type="ECO:0000255" key="3">
    <source>
        <dbReference type="PROSITE-ProRule" id="PRU00043"/>
    </source>
</evidence>
<name>PCDH3_RAT</name>
<gene>
    <name type="primary">Pcdh3</name>
</gene>
<sequence length="797" mass="87474">METALAKIPQQRQVFFLTILSLLWKSSSEAIRYSMPEETESGYMVANLAKDLGIRVGELSSRGAQIHYKGNKELLQLDAETGNLFLKEKLDRELLCGETEPCVLNFQIILENPMQFFQTELQLTDINDHSPEFPNKKMLLTIPESAHPGTVFPLKAARDSDIGSNAVQNYTVNPNLHFHVVTHSRTDGRKYPELVLDRALDREEQPELTLILTALDGGAPSRSGTTTVHIEVVDINDNSPQFVQSLYKVQVPENNPLNAFVVTVSATDLDAGVYGNVTYSLFQGYGVFQPFVIDEITGEIHLSKELDFEEISNHNIEIAATDGGGLSGKCTVAVQVLDVNDNAPELTIRKLTVLVPENSAETVVAVFSVSDSDSGDNGRMVCSIPNNIPFLLKPTFENYYTLVTEGPLDRENRAEYNITITVSDLGTPRLTTQHTITVQVSDINDNAPAFTQTSYTMFVHENNSPALHIGTISATDSDSGSNAHITYSLLPPDDPQLALDSLISINVDNGQLFALRALDYEALQSFEFYVGATDGGSPALSSQTLVRMVVLDDNDNAPFVLYPLQNASAPCTELLPRAAEPGYLITKVVAVDRDSGQNAWLSFQLLKATEPGLFSVWAHNGEVRTTRLLSERDAQKHKLLLLVKDNGDPLRSANVTLHVLVVDGFSQPYLPLAEVAQDSMQDNYDVLTLYLVIALASVSSLFLLSVVLFVGVRLCRRAREASLGDYSVPEGHFPSHLVDVSGAGTLSQSYQYEVCLNGGTRTNEFNFLKPLFPILPTQAAAAEERENAVVHNSVGFY</sequence>
<proteinExistence type="evidence at transcript level"/>
<protein>
    <recommendedName>
        <fullName>Protocadherin-3</fullName>
    </recommendedName>
</protein>
<organism>
    <name type="scientific">Rattus norvegicus</name>
    <name type="common">Rat</name>
    <dbReference type="NCBI Taxonomy" id="10116"/>
    <lineage>
        <taxon>Eukaryota</taxon>
        <taxon>Metazoa</taxon>
        <taxon>Chordata</taxon>
        <taxon>Craniata</taxon>
        <taxon>Vertebrata</taxon>
        <taxon>Euteleostomi</taxon>
        <taxon>Mammalia</taxon>
        <taxon>Eutheria</taxon>
        <taxon>Euarchontoglires</taxon>
        <taxon>Glires</taxon>
        <taxon>Rodentia</taxon>
        <taxon>Myomorpha</taxon>
        <taxon>Muroidea</taxon>
        <taxon>Muridae</taxon>
        <taxon>Murinae</taxon>
        <taxon>Rattus</taxon>
    </lineage>
</organism>
<reference key="1">
    <citation type="journal article" date="1995" name="Genomics">
        <title>Cloning, expression, and chromosomal localization of a novel cadherin-related protein, protocadherin-3.</title>
        <authorList>
            <person name="Sago H."/>
            <person name="Kitagawa M."/>
            <person name="Obata S."/>
            <person name="Mori N."/>
            <person name="Taketani S."/>
            <person name="Rochelle J.M."/>
            <person name="Seldin M.F."/>
            <person name="Davidson M.K."/>
            <person name="John T."/>
            <person name="Suzuki S.T."/>
        </authorList>
    </citation>
    <scope>NUCLEOTIDE SEQUENCE [MRNA]</scope>
    <source>
        <strain>Sprague-Dawley</strain>
        <tissue>Brain</tissue>
    </source>
</reference>